<dbReference type="EMBL" id="CP001600">
    <property type="protein sequence ID" value="ACR68387.1"/>
    <property type="molecule type" value="Genomic_DNA"/>
</dbReference>
<dbReference type="RefSeq" id="WP_015870559.1">
    <property type="nucleotide sequence ID" value="NZ_CP169062.1"/>
</dbReference>
<dbReference type="SMR" id="C5BHP3"/>
<dbReference type="STRING" id="67780.B6E78_16200"/>
<dbReference type="KEGG" id="eic:NT01EI_1179"/>
<dbReference type="PATRIC" id="fig|634503.3.peg.1068"/>
<dbReference type="HOGENOM" id="CLU_113664_3_2_6"/>
<dbReference type="OrthoDB" id="282744at2"/>
<dbReference type="Proteomes" id="UP000001485">
    <property type="component" value="Chromosome"/>
</dbReference>
<dbReference type="GO" id="GO:0005737">
    <property type="term" value="C:cytoplasm"/>
    <property type="evidence" value="ECO:0007669"/>
    <property type="project" value="UniProtKB-SubCell"/>
</dbReference>
<dbReference type="GO" id="GO:0008657">
    <property type="term" value="F:DNA topoisomerase type II (double strand cut, ATP-hydrolyzing) inhibitor activity"/>
    <property type="evidence" value="ECO:0007669"/>
    <property type="project" value="UniProtKB-UniRule"/>
</dbReference>
<dbReference type="Gene3D" id="3.20.80.10">
    <property type="entry name" value="Regulatory factor, effector binding domain"/>
    <property type="match status" value="1"/>
</dbReference>
<dbReference type="HAMAP" id="MF_01896">
    <property type="entry name" value="DNA_gyrase_inhibitor"/>
    <property type="match status" value="1"/>
</dbReference>
<dbReference type="InterPro" id="IPR010499">
    <property type="entry name" value="AraC_E-bd"/>
</dbReference>
<dbReference type="InterPro" id="IPR050908">
    <property type="entry name" value="DNA_gyrase_inhibitor"/>
</dbReference>
<dbReference type="InterPro" id="IPR024911">
    <property type="entry name" value="DNA_gyrase_inhibitor_GyrI"/>
</dbReference>
<dbReference type="InterPro" id="IPR029442">
    <property type="entry name" value="GyrI-like"/>
</dbReference>
<dbReference type="InterPro" id="IPR011256">
    <property type="entry name" value="Reg_factor_effector_dom_sf"/>
</dbReference>
<dbReference type="PANTHER" id="PTHR40055:SF2">
    <property type="entry name" value="DNA GYRASE INHIBITOR"/>
    <property type="match status" value="1"/>
</dbReference>
<dbReference type="PANTHER" id="PTHR40055">
    <property type="entry name" value="TRANSCRIPTIONAL REGULATOR YGIV-RELATED"/>
    <property type="match status" value="1"/>
</dbReference>
<dbReference type="Pfam" id="PF06445">
    <property type="entry name" value="GyrI-like"/>
    <property type="match status" value="1"/>
</dbReference>
<dbReference type="SMART" id="SM00871">
    <property type="entry name" value="AraC_E_bind"/>
    <property type="match status" value="1"/>
</dbReference>
<dbReference type="SUPFAM" id="SSF55136">
    <property type="entry name" value="Probable bacterial effector-binding domain"/>
    <property type="match status" value="1"/>
</dbReference>
<reference key="1">
    <citation type="submission" date="2009-03" db="EMBL/GenBank/DDBJ databases">
        <title>Complete genome sequence of Edwardsiella ictaluri 93-146.</title>
        <authorList>
            <person name="Williams M.L."/>
            <person name="Gillaspy A.F."/>
            <person name="Dyer D.W."/>
            <person name="Thune R.L."/>
            <person name="Waldbieser G.C."/>
            <person name="Schuster S.C."/>
            <person name="Gipson J."/>
            <person name="Zaitshik J."/>
            <person name="Landry C."/>
            <person name="Lawrence M.L."/>
        </authorList>
    </citation>
    <scope>NUCLEOTIDE SEQUENCE [LARGE SCALE GENOMIC DNA]</scope>
    <source>
        <strain>93-146</strain>
    </source>
</reference>
<gene>
    <name evidence="1" type="primary">sbmC</name>
    <name type="ordered locus">NT01EI_1179</name>
</gene>
<sequence>MQVRIVSLAAQPLFVLRVQGPFAQSLGPGFERLMAWSARHGLRGQWMALYYDNPREVAPDALRADVALTTASVTLPSDGEAYGIRRGALAGGLYALAQVRVTDNDFATPWIALFDQALPACGYRPDGGPCFERYLSDGRGSGEWLLELGVPVRKN</sequence>
<evidence type="ECO:0000255" key="1">
    <source>
        <dbReference type="HAMAP-Rule" id="MF_01896"/>
    </source>
</evidence>
<feature type="chain" id="PRO_0000409695" description="DNA gyrase inhibitor">
    <location>
        <begin position="1"/>
        <end position="155"/>
    </location>
</feature>
<accession>C5BHP3</accession>
<name>SBMC_EDWI9</name>
<keyword id="KW-0963">Cytoplasm</keyword>
<keyword id="KW-0346">Stress response</keyword>
<organism>
    <name type="scientific">Edwardsiella ictaluri (strain 93-146)</name>
    <dbReference type="NCBI Taxonomy" id="634503"/>
    <lineage>
        <taxon>Bacteria</taxon>
        <taxon>Pseudomonadati</taxon>
        <taxon>Pseudomonadota</taxon>
        <taxon>Gammaproteobacteria</taxon>
        <taxon>Enterobacterales</taxon>
        <taxon>Hafniaceae</taxon>
        <taxon>Edwardsiella</taxon>
    </lineage>
</organism>
<proteinExistence type="inferred from homology"/>
<comment type="function">
    <text evidence="1">Inhibits the supercoiling activity of DNA gyrase. Acts by inhibiting DNA gyrase at an early step, prior to (or at the step of) binding of DNA by the gyrase. It protects cells against toxins that target DNA gyrase, by inhibiting activity of these toxins and reducing the formation of lethal double-strand breaks in the cell.</text>
</comment>
<comment type="subunit">
    <text evidence="1">Interacts with DNA gyrase.</text>
</comment>
<comment type="subcellular location">
    <subcellularLocation>
        <location evidence="1">Cytoplasm</location>
    </subcellularLocation>
</comment>
<comment type="similarity">
    <text evidence="1">Belongs to the DNA gyrase inhibitor family.</text>
</comment>
<protein>
    <recommendedName>
        <fullName evidence="1">DNA gyrase inhibitor</fullName>
    </recommendedName>
</protein>